<evidence type="ECO:0000250" key="1"/>
<evidence type="ECO:0000250" key="2">
    <source>
        <dbReference type="UniProtKB" id="P17563"/>
    </source>
</evidence>
<evidence type="ECO:0000250" key="3">
    <source>
        <dbReference type="UniProtKB" id="Q13228"/>
    </source>
</evidence>
<evidence type="ECO:0000250" key="4">
    <source>
        <dbReference type="UniProtKB" id="Q8VIF7"/>
    </source>
</evidence>
<evidence type="ECO:0000269" key="5">
    <source>
    </source>
</evidence>
<evidence type="ECO:0000305" key="6"/>
<comment type="function">
    <text evidence="3 5">Catalyzes the oxidation of methanethiol, an organosulfur compound known to be produced in substantial amounts by gut bacteria (By similarity). Selenium-binding protein which may be involved in the sensing of reactive xenobiotics in the cytoplasm. May be involved in intra-Golgi protein transport.</text>
</comment>
<comment type="catalytic activity">
    <reaction evidence="3">
        <text>methanethiol + O2 + H2O = hydrogen sulfide + formaldehyde + H2O2 + H(+)</text>
        <dbReference type="Rhea" id="RHEA:11812"/>
        <dbReference type="ChEBI" id="CHEBI:15377"/>
        <dbReference type="ChEBI" id="CHEBI:15378"/>
        <dbReference type="ChEBI" id="CHEBI:15379"/>
        <dbReference type="ChEBI" id="CHEBI:16007"/>
        <dbReference type="ChEBI" id="CHEBI:16240"/>
        <dbReference type="ChEBI" id="CHEBI:16842"/>
        <dbReference type="ChEBI" id="CHEBI:29919"/>
        <dbReference type="EC" id="1.8.3.4"/>
    </reaction>
</comment>
<comment type="pathway">
    <text evidence="3">Organosulfur degradation.</text>
</comment>
<comment type="subunit">
    <text evidence="1">Interacts with USP33.</text>
</comment>
<comment type="subcellular location">
    <subcellularLocation>
        <location evidence="3">Nucleus</location>
    </subcellularLocation>
    <subcellularLocation>
        <location evidence="3">Cytoplasm</location>
        <location evidence="3">Cytosol</location>
    </subcellularLocation>
    <subcellularLocation>
        <location evidence="4">Membrane</location>
        <topology evidence="4">Peripheral membrane protein</topology>
    </subcellularLocation>
    <text evidence="4">May associate with Golgi membrane (By similarity). May associate with the membrane of autophagosomes (By similarity).</text>
</comment>
<comment type="PTM">
    <text evidence="1">The N-terminus is blocked.</text>
</comment>
<comment type="similarity">
    <text evidence="6">Belongs to the selenium-binding protein family.</text>
</comment>
<dbReference type="EC" id="1.8.3.4" evidence="3"/>
<dbReference type="EMBL" id="BC105545">
    <property type="protein sequence ID" value="AAI05546.1"/>
    <property type="molecule type" value="mRNA"/>
</dbReference>
<dbReference type="RefSeq" id="NP_001039513.1">
    <property type="nucleotide sequence ID" value="NM_001046048.1"/>
</dbReference>
<dbReference type="SMR" id="Q2KJ32"/>
<dbReference type="FunCoup" id="Q2KJ32">
    <property type="interactions" value="1021"/>
</dbReference>
<dbReference type="STRING" id="9913.ENSBTAP00000063723"/>
<dbReference type="SwissPalm" id="Q2KJ32"/>
<dbReference type="PaxDb" id="9913-ENSBTAP00000010644"/>
<dbReference type="PeptideAtlas" id="Q2KJ32"/>
<dbReference type="Ensembl" id="ENSBTAT00000010644.3">
    <property type="protein sequence ID" value="ENSBTAP00000010644.2"/>
    <property type="gene ID" value="ENSBTAG00000008091.4"/>
</dbReference>
<dbReference type="GeneID" id="510154"/>
<dbReference type="KEGG" id="bta:510154"/>
<dbReference type="CTD" id="8991"/>
<dbReference type="VEuPathDB" id="HostDB:ENSBTAG00000008091"/>
<dbReference type="VGNC" id="VGNC:34422">
    <property type="gene designation" value="SELENBP1"/>
</dbReference>
<dbReference type="eggNOG" id="KOG0918">
    <property type="taxonomic scope" value="Eukaryota"/>
</dbReference>
<dbReference type="GeneTree" id="ENSGT00390000014244"/>
<dbReference type="HOGENOM" id="CLU_032512_0_0_1"/>
<dbReference type="InParanoid" id="Q2KJ32"/>
<dbReference type="OMA" id="AYDFWWH"/>
<dbReference type="OrthoDB" id="10252446at2759"/>
<dbReference type="TreeFam" id="TF315241"/>
<dbReference type="Proteomes" id="UP000009136">
    <property type="component" value="Chromosome 3"/>
</dbReference>
<dbReference type="Bgee" id="ENSBTAG00000008091">
    <property type="expression patterns" value="Expressed in cortex of kidney and 103 other cell types or tissues"/>
</dbReference>
<dbReference type="GO" id="GO:0005829">
    <property type="term" value="C:cytosol"/>
    <property type="evidence" value="ECO:0007669"/>
    <property type="project" value="UniProtKB-SubCell"/>
</dbReference>
<dbReference type="GO" id="GO:0016020">
    <property type="term" value="C:membrane"/>
    <property type="evidence" value="ECO:0007669"/>
    <property type="project" value="UniProtKB-SubCell"/>
</dbReference>
<dbReference type="GO" id="GO:0005634">
    <property type="term" value="C:nucleus"/>
    <property type="evidence" value="ECO:0007669"/>
    <property type="project" value="UniProtKB-SubCell"/>
</dbReference>
<dbReference type="GO" id="GO:0018549">
    <property type="term" value="F:methanethiol oxidase activity"/>
    <property type="evidence" value="ECO:0007669"/>
    <property type="project" value="UniProtKB-EC"/>
</dbReference>
<dbReference type="GO" id="GO:0008430">
    <property type="term" value="F:selenium binding"/>
    <property type="evidence" value="ECO:0007669"/>
    <property type="project" value="InterPro"/>
</dbReference>
<dbReference type="GO" id="GO:0015031">
    <property type="term" value="P:protein transport"/>
    <property type="evidence" value="ECO:0007669"/>
    <property type="project" value="UniProtKB-KW"/>
</dbReference>
<dbReference type="InterPro" id="IPR008826">
    <property type="entry name" value="Se-bd"/>
</dbReference>
<dbReference type="PANTHER" id="PTHR23300">
    <property type="entry name" value="METHANETHIOL OXIDASE"/>
    <property type="match status" value="1"/>
</dbReference>
<dbReference type="PANTHER" id="PTHR23300:SF0">
    <property type="entry name" value="METHANETHIOL OXIDASE"/>
    <property type="match status" value="1"/>
</dbReference>
<dbReference type="Pfam" id="PF05694">
    <property type="entry name" value="SBP56"/>
    <property type="match status" value="1"/>
</dbReference>
<dbReference type="SUPFAM" id="SSF75011">
    <property type="entry name" value="3-carboxy-cis,cis-mucoante lactonizing enzyme"/>
    <property type="match status" value="1"/>
</dbReference>
<proteinExistence type="evidence at protein level"/>
<accession>Q2KJ32</accession>
<organism>
    <name type="scientific">Bos taurus</name>
    <name type="common">Bovine</name>
    <dbReference type="NCBI Taxonomy" id="9913"/>
    <lineage>
        <taxon>Eukaryota</taxon>
        <taxon>Metazoa</taxon>
        <taxon>Chordata</taxon>
        <taxon>Craniata</taxon>
        <taxon>Vertebrata</taxon>
        <taxon>Euteleostomi</taxon>
        <taxon>Mammalia</taxon>
        <taxon>Eutheria</taxon>
        <taxon>Laurasiatheria</taxon>
        <taxon>Artiodactyla</taxon>
        <taxon>Ruminantia</taxon>
        <taxon>Pecora</taxon>
        <taxon>Bovidae</taxon>
        <taxon>Bovinae</taxon>
        <taxon>Bos</taxon>
    </lineage>
</organism>
<sequence>MATKCGKCGPGYPSPLEAMKGPREELVYLPCIYRNTGTEAPDYLATVDVNPKSPQYSQVIHRLPMPNLKDELHHSGWNTCSSCFGDSTKSRTKLLLPSLISSRVYVVDVATEPRAPKLHKVVEPEEIHAKCDLSYLHTSHCLASGEVMISALGDPRGNGKGGFVLLDGETFEVKGTWEQPGGAAPMGYDFWYQPRHNVMISTEWAAPNVLRDGFNPADVEAGLYGQHLYVWDWQRHERVQTLTLQDGLIPLEIRFLHNPAADQGFVGCALGSNIQRFYKNQGGTWSVEKVIQVPPKKVKGWILPEMPSLITDILLSLDDRFLYFSNWLHGDLRQYDISDPKRPRLVGQIFLGGSIVKGGPVQVLEDQELKCQPEPLVVKGKRVAGGPQMIQLSLDGTRLYVTTSLYSAWDKQFYPDLIREGSVMLQIDVDTVRGGLKLNPNFLVDFGKEPLGPALAHELRYPGGDCSSDIWL</sequence>
<name>SBP1_BOVIN</name>
<keyword id="KW-0007">Acetylation</keyword>
<keyword id="KW-0963">Cytoplasm</keyword>
<keyword id="KW-0903">Direct protein sequencing</keyword>
<keyword id="KW-0472">Membrane</keyword>
<keyword id="KW-0539">Nucleus</keyword>
<keyword id="KW-0560">Oxidoreductase</keyword>
<keyword id="KW-0597">Phosphoprotein</keyword>
<keyword id="KW-0653">Protein transport</keyword>
<keyword id="KW-1185">Reference proteome</keyword>
<keyword id="KW-0711">Selenium</keyword>
<keyword id="KW-0813">Transport</keyword>
<feature type="initiator methionine" description="Removed" evidence="3">
    <location>
        <position position="1"/>
    </location>
</feature>
<feature type="chain" id="PRO_0000289061" description="Methanethiol oxidase">
    <location>
        <begin position="2"/>
        <end position="472"/>
    </location>
</feature>
<feature type="modified residue" description="N-acetylalanine" evidence="3">
    <location>
        <position position="2"/>
    </location>
</feature>
<feature type="modified residue" description="Phosphoserine" evidence="2">
    <location>
        <position position="467"/>
    </location>
</feature>
<reference key="1">
    <citation type="submission" date="2005-09" db="EMBL/GenBank/DDBJ databases">
        <authorList>
            <consortium name="NIH - Mammalian Gene Collection (MGC) project"/>
        </authorList>
    </citation>
    <scope>NUCLEOTIDE SEQUENCE [LARGE SCALE MRNA]</scope>
    <source>
        <strain>Hereford</strain>
        <tissue>Ascending colon</tissue>
    </source>
</reference>
<reference key="2">
    <citation type="journal article" date="2000" name="J. Biol. Chem.">
        <title>A 56-kDa selenium-binding protein participates in intra-Golgi protein transport.</title>
        <authorList>
            <person name="Porat A."/>
            <person name="Sagiv Y."/>
            <person name="Elazar Z."/>
        </authorList>
    </citation>
    <scope>PROTEIN SEQUENCE OF 103-114; 212-220; 320-325 AND 436-448</scope>
    <scope>FUNCTION</scope>
    <scope>SUBCELLULAR LOCATION</scope>
    <source>
        <tissue>Brain</tissue>
    </source>
</reference>
<gene>
    <name type="primary">SELENBP1</name>
    <name type="synonym">SBP</name>
</gene>
<protein>
    <recommendedName>
        <fullName evidence="3">Methanethiol oxidase</fullName>
        <shortName evidence="3">MTO</shortName>
        <ecNumber evidence="3">1.8.3.4</ecNumber>
    </recommendedName>
    <alternativeName>
        <fullName>56 kDa selenium-binding protein</fullName>
        <shortName>SBP56</shortName>
        <shortName>SP56</shortName>
    </alternativeName>
    <alternativeName>
        <fullName>Selenium-binding protein 1</fullName>
    </alternativeName>
</protein>